<evidence type="ECO:0000250" key="1">
    <source>
        <dbReference type="UniProtKB" id="P36639"/>
    </source>
</evidence>
<evidence type="ECO:0000250" key="2">
    <source>
        <dbReference type="UniProtKB" id="P53369"/>
    </source>
</evidence>
<evidence type="ECO:0000250" key="3">
    <source>
        <dbReference type="UniProtKB" id="Q7ZWC3"/>
    </source>
</evidence>
<evidence type="ECO:0000255" key="4">
    <source>
        <dbReference type="PROSITE-ProRule" id="PRU00794"/>
    </source>
</evidence>
<evidence type="ECO:0000269" key="5">
    <source>
    </source>
</evidence>
<evidence type="ECO:0000269" key="6">
    <source>
    </source>
</evidence>
<evidence type="ECO:0000269" key="7">
    <source>
    </source>
</evidence>
<evidence type="ECO:0000303" key="8">
    <source>
    </source>
</evidence>
<evidence type="ECO:0000305" key="9"/>
<evidence type="ECO:0000305" key="10">
    <source>
    </source>
</evidence>
<evidence type="ECO:0000305" key="11">
    <source>
    </source>
</evidence>
<evidence type="ECO:0000305" key="12">
    <source>
    </source>
</evidence>
<evidence type="ECO:0000312" key="13">
    <source>
        <dbReference type="Proteomes" id="UP000002254"/>
    </source>
</evidence>
<evidence type="ECO:0007744" key="14">
    <source>
        <dbReference type="PDB" id="5MZF"/>
    </source>
</evidence>
<evidence type="ECO:0007829" key="15">
    <source>
        <dbReference type="PDB" id="5MZF"/>
    </source>
</evidence>
<proteinExistence type="evidence at protein level"/>
<protein>
    <recommendedName>
        <fullName evidence="9">Oxidized purine nucleoside triphosphate hydrolase</fullName>
        <ecNumber evidence="1">3.6.1.56</ecNumber>
    </recommendedName>
    <alternativeName>
        <fullName>2-hydroxy-dATP diphosphatase</fullName>
    </alternativeName>
    <alternativeName>
        <fullName>7,8-dihydro-8-oxoguanine triphosphatase</fullName>
    </alternativeName>
    <alternativeName>
        <fullName>8-oxo-dGTPase</fullName>
    </alternativeName>
    <alternativeName>
        <fullName evidence="1">Methylated purine nucleoside triphosphate hydrolase</fullName>
        <ecNumber evidence="1">3.6.1.-</ecNumber>
    </alternativeName>
    <alternativeName>
        <fullName>Nucleoside diphosphate-linked moiety X motif 1</fullName>
        <shortName>Nudix motif 1</shortName>
    </alternativeName>
</protein>
<dbReference type="EC" id="3.6.1.56" evidence="1"/>
<dbReference type="EC" id="3.6.1.-" evidence="1"/>
<dbReference type="EMBL" id="AAEX03004329">
    <property type="status" value="NOT_ANNOTATED_CDS"/>
    <property type="molecule type" value="Genomic_DNA"/>
</dbReference>
<dbReference type="RefSeq" id="XP_038395577.1">
    <property type="nucleotide sequence ID" value="XM_038539649.1"/>
</dbReference>
<dbReference type="RefSeq" id="XP_038524376.1">
    <property type="nucleotide sequence ID" value="XM_038668448.1"/>
</dbReference>
<dbReference type="RefSeq" id="XP_547012.4">
    <property type="nucleotide sequence ID" value="XM_547012.6"/>
</dbReference>
<dbReference type="PDB" id="5MZF">
    <property type="method" value="X-ray"/>
    <property type="resolution" value="2.00 A"/>
    <property type="chains" value="A/B/C/D=1-156"/>
</dbReference>
<dbReference type="PDBsum" id="5MZF"/>
<dbReference type="SMR" id="F1P963"/>
<dbReference type="FunCoup" id="F1P963">
    <property type="interactions" value="16"/>
</dbReference>
<dbReference type="STRING" id="9615.ENSCAFP00000054594"/>
<dbReference type="PaxDb" id="9612-ENSCAFP00000024183"/>
<dbReference type="Ensembl" id="ENSCAFT00040039181.1">
    <property type="protein sequence ID" value="ENSCAFP00040034170.1"/>
    <property type="gene ID" value="ENSCAFG00040021127.1"/>
</dbReference>
<dbReference type="GeneID" id="489894"/>
<dbReference type="KEGG" id="cfa:489894"/>
<dbReference type="CTD" id="4521"/>
<dbReference type="eggNOG" id="ENOG502S254">
    <property type="taxonomic scope" value="Eukaryota"/>
</dbReference>
<dbReference type="HOGENOM" id="CLU_037162_11_1_1"/>
<dbReference type="InParanoid" id="F1P963"/>
<dbReference type="TreeFam" id="TF106348"/>
<dbReference type="BRENDA" id="3.6.1.56">
    <property type="organism ID" value="1153"/>
</dbReference>
<dbReference type="Reactome" id="R-CFA-2393930">
    <property type="pathway name" value="Phosphate bond hydrolysis by NUDT proteins"/>
</dbReference>
<dbReference type="Proteomes" id="UP000002254">
    <property type="component" value="Unplaced"/>
</dbReference>
<dbReference type="Proteomes" id="UP000694429">
    <property type="component" value="Unplaced"/>
</dbReference>
<dbReference type="Proteomes" id="UP000694542">
    <property type="component" value="Chromosome 6"/>
</dbReference>
<dbReference type="Proteomes" id="UP000805418">
    <property type="component" value="Unplaced"/>
</dbReference>
<dbReference type="GO" id="GO:0001669">
    <property type="term" value="C:acrosomal vesicle"/>
    <property type="evidence" value="ECO:0007669"/>
    <property type="project" value="UniProtKB-SubCell"/>
</dbReference>
<dbReference type="GO" id="GO:0005737">
    <property type="term" value="C:cytoplasm"/>
    <property type="evidence" value="ECO:0000318"/>
    <property type="project" value="GO_Central"/>
</dbReference>
<dbReference type="GO" id="GO:0031965">
    <property type="term" value="C:nuclear membrane"/>
    <property type="evidence" value="ECO:0007669"/>
    <property type="project" value="UniProtKB-SubCell"/>
</dbReference>
<dbReference type="GO" id="GO:0106377">
    <property type="term" value="F:2-hydroxy-ATP hydrolase activity"/>
    <property type="evidence" value="ECO:0000250"/>
    <property type="project" value="UniProtKB"/>
</dbReference>
<dbReference type="GO" id="GO:0106378">
    <property type="term" value="F:2-hydroxy-dATP hydrolase activity"/>
    <property type="evidence" value="ECO:0000250"/>
    <property type="project" value="UniProtKB"/>
</dbReference>
<dbReference type="GO" id="GO:0035539">
    <property type="term" value="F:8-oxo-7,8-dihydrodeoxyguanosine triphosphate pyrophosphatase activity"/>
    <property type="evidence" value="ECO:0000250"/>
    <property type="project" value="UniProtKB"/>
</dbReference>
<dbReference type="GO" id="GO:0008413">
    <property type="term" value="F:8-oxo-7,8-dihydroguanosine triphosphate pyrophosphatase activity"/>
    <property type="evidence" value="ECO:0000318"/>
    <property type="project" value="GO_Central"/>
</dbReference>
<dbReference type="GO" id="GO:0008828">
    <property type="term" value="F:dATP diphosphatase activity"/>
    <property type="evidence" value="ECO:0007669"/>
    <property type="project" value="UniProtKB-EC"/>
</dbReference>
<dbReference type="GO" id="GO:0046872">
    <property type="term" value="F:metal ion binding"/>
    <property type="evidence" value="ECO:0007669"/>
    <property type="project" value="UniProtKB-KW"/>
</dbReference>
<dbReference type="GO" id="GO:0106431">
    <property type="term" value="F:N6-methyl-(d)ATP hydrolase activity"/>
    <property type="evidence" value="ECO:0007669"/>
    <property type="project" value="RHEA"/>
</dbReference>
<dbReference type="GO" id="GO:0106433">
    <property type="term" value="F:O6-methyl-dGTP hydrolase activity"/>
    <property type="evidence" value="ECO:0007669"/>
    <property type="project" value="RHEA"/>
</dbReference>
<dbReference type="GO" id="GO:0003723">
    <property type="term" value="F:RNA binding"/>
    <property type="evidence" value="ECO:0007669"/>
    <property type="project" value="UniProtKB-KW"/>
</dbReference>
<dbReference type="GO" id="GO:0042262">
    <property type="term" value="P:DNA protection"/>
    <property type="evidence" value="ECO:0000318"/>
    <property type="project" value="GO_Central"/>
</dbReference>
<dbReference type="GO" id="GO:0006152">
    <property type="term" value="P:purine nucleoside catabolic process"/>
    <property type="evidence" value="ECO:0000250"/>
    <property type="project" value="UniProtKB"/>
</dbReference>
<dbReference type="CDD" id="cd03427">
    <property type="entry name" value="NUDIX_MTH1_Nudt1"/>
    <property type="match status" value="1"/>
</dbReference>
<dbReference type="FunFam" id="3.90.79.10:FF:000043">
    <property type="entry name" value="7,8-dihydro-8-oxoguanine triphosphatase"/>
    <property type="match status" value="1"/>
</dbReference>
<dbReference type="Gene3D" id="3.90.79.10">
    <property type="entry name" value="Nucleoside Triphosphate Pyrophosphohydrolase"/>
    <property type="match status" value="1"/>
</dbReference>
<dbReference type="InterPro" id="IPR003563">
    <property type="entry name" value="8ODP"/>
</dbReference>
<dbReference type="InterPro" id="IPR020476">
    <property type="entry name" value="Nudix_hydrolase"/>
</dbReference>
<dbReference type="InterPro" id="IPR015797">
    <property type="entry name" value="NUDIX_hydrolase-like_dom_sf"/>
</dbReference>
<dbReference type="InterPro" id="IPR020084">
    <property type="entry name" value="NUDIX_hydrolase_CS"/>
</dbReference>
<dbReference type="InterPro" id="IPR000086">
    <property type="entry name" value="NUDIX_hydrolase_dom"/>
</dbReference>
<dbReference type="PANTHER" id="PTHR43758">
    <property type="entry name" value="7,8-DIHYDRO-8-OXOGUANINE TRIPHOSPHATASE"/>
    <property type="match status" value="1"/>
</dbReference>
<dbReference type="PANTHER" id="PTHR43758:SF2">
    <property type="entry name" value="OXIDIZED PURINE NUCLEOSIDE TRIPHOSPHATE HYDROLASE"/>
    <property type="match status" value="1"/>
</dbReference>
<dbReference type="Pfam" id="PF00293">
    <property type="entry name" value="NUDIX"/>
    <property type="match status" value="1"/>
</dbReference>
<dbReference type="PRINTS" id="PR01403">
    <property type="entry name" value="8OXTPHPHTASE"/>
</dbReference>
<dbReference type="PRINTS" id="PR00502">
    <property type="entry name" value="NUDIXFAMILY"/>
</dbReference>
<dbReference type="SUPFAM" id="SSF55811">
    <property type="entry name" value="Nudix"/>
    <property type="match status" value="1"/>
</dbReference>
<dbReference type="PROSITE" id="PS51462">
    <property type="entry name" value="NUDIX"/>
    <property type="match status" value="1"/>
</dbReference>
<dbReference type="PROSITE" id="PS00893">
    <property type="entry name" value="NUDIX_BOX"/>
    <property type="match status" value="1"/>
</dbReference>
<sequence length="156" mass="18080">MGTSRLYTLVLVLQPERVLLGMKKRGFGAGRWNGFGGKVQEGETIEDGAKRELREESGLTVDTLHKVGQIMFEFVGEPELMDVHIFCTDSVQGTPVESDEMRPQWFQLDQIPFTDMWPDDSYWFPLLLQKKKFHGYFRFQGPNTILDYTLREVDKL</sequence>
<gene>
    <name type="primary">NUDT1</name>
    <name evidence="8" type="synonym">MTH1</name>
</gene>
<accession>F1P963</accession>
<feature type="chain" id="PRO_0000444047" description="Oxidized purine nucleoside triphosphate hydrolase">
    <location>
        <begin position="1"/>
        <end position="156"/>
    </location>
</feature>
<feature type="domain" description="Nudix hydrolase" evidence="4">
    <location>
        <begin position="3"/>
        <end position="132"/>
    </location>
</feature>
<feature type="short sequence motif" description="Nudix box" evidence="4">
    <location>
        <begin position="37"/>
        <end position="58"/>
    </location>
</feature>
<feature type="binding site" evidence="1">
    <location>
        <position position="8"/>
    </location>
    <ligand>
        <name>2-oxo-dATP</name>
        <dbReference type="ChEBI" id="CHEBI:77897"/>
    </ligand>
</feature>
<feature type="binding site" evidence="1">
    <location>
        <position position="23"/>
    </location>
    <ligand>
        <name>8-oxo-dGTP</name>
        <dbReference type="ChEBI" id="CHEBI:77896"/>
    </ligand>
</feature>
<feature type="binding site" evidence="1">
    <location>
        <position position="33"/>
    </location>
    <ligand>
        <name>2-oxo-dATP</name>
        <dbReference type="ChEBI" id="CHEBI:77897"/>
    </ligand>
</feature>
<feature type="binding site" evidence="1">
    <location>
        <begin position="35"/>
        <end position="38"/>
    </location>
    <ligand>
        <name>2-oxo-dATP</name>
        <dbReference type="ChEBI" id="CHEBI:77897"/>
    </ligand>
</feature>
<feature type="binding site" evidence="3">
    <location>
        <position position="36"/>
    </location>
    <ligand>
        <name>Mg(2+)</name>
        <dbReference type="ChEBI" id="CHEBI:18420"/>
        <label>1</label>
    </ligand>
</feature>
<feature type="binding site" evidence="3">
    <location>
        <position position="52"/>
    </location>
    <ligand>
        <name>Mg(2+)</name>
        <dbReference type="ChEBI" id="CHEBI:18420"/>
        <label>2</label>
    </ligand>
</feature>
<feature type="binding site" evidence="3">
    <location>
        <position position="55"/>
    </location>
    <ligand>
        <name>Mg(2+)</name>
        <dbReference type="ChEBI" id="CHEBI:18420"/>
        <label>2</label>
    </ligand>
</feature>
<feature type="binding site" evidence="3">
    <location>
        <position position="56"/>
    </location>
    <ligand>
        <name>Mg(2+)</name>
        <dbReference type="ChEBI" id="CHEBI:18420"/>
        <label>1</label>
    </ligand>
</feature>
<feature type="binding site" evidence="3">
    <location>
        <position position="100"/>
    </location>
    <ligand>
        <name>Mg(2+)</name>
        <dbReference type="ChEBI" id="CHEBI:18420"/>
        <label>1</label>
    </ligand>
</feature>
<feature type="binding site" evidence="1">
    <location>
        <begin position="117"/>
        <end position="120"/>
    </location>
    <ligand>
        <name>2-oxo-dATP</name>
        <dbReference type="ChEBI" id="CHEBI:77897"/>
    </ligand>
</feature>
<feature type="strand" evidence="15">
    <location>
        <begin position="4"/>
        <end position="13"/>
    </location>
</feature>
<feature type="strand" evidence="15">
    <location>
        <begin position="15"/>
        <end position="23"/>
    </location>
</feature>
<feature type="turn" evidence="15">
    <location>
        <begin position="27"/>
        <end position="30"/>
    </location>
</feature>
<feature type="strand" evidence="15">
    <location>
        <begin position="31"/>
        <end position="33"/>
    </location>
</feature>
<feature type="strand" evidence="15">
    <location>
        <begin position="35"/>
        <end position="38"/>
    </location>
</feature>
<feature type="helix" evidence="15">
    <location>
        <begin position="45"/>
        <end position="57"/>
    </location>
</feature>
<feature type="strand" evidence="15">
    <location>
        <begin position="65"/>
        <end position="74"/>
    </location>
</feature>
<feature type="strand" evidence="15">
    <location>
        <begin position="78"/>
        <end position="89"/>
    </location>
</feature>
<feature type="strand" evidence="15">
    <location>
        <begin position="99"/>
        <end position="107"/>
    </location>
</feature>
<feature type="helix" evidence="15">
    <location>
        <begin position="113"/>
        <end position="115"/>
    </location>
</feature>
<feature type="helix" evidence="15">
    <location>
        <begin position="120"/>
        <end position="128"/>
    </location>
</feature>
<feature type="strand" evidence="15">
    <location>
        <begin position="133"/>
        <end position="140"/>
    </location>
</feature>
<feature type="turn" evidence="15">
    <location>
        <begin position="141"/>
        <end position="143"/>
    </location>
</feature>
<feature type="strand" evidence="15">
    <location>
        <begin position="144"/>
        <end position="152"/>
    </location>
</feature>
<organism evidence="13">
    <name type="scientific">Canis lupus familiaris</name>
    <name type="common">Dog</name>
    <name type="synonym">Canis familiaris</name>
    <dbReference type="NCBI Taxonomy" id="9615"/>
    <lineage>
        <taxon>Eukaryota</taxon>
        <taxon>Metazoa</taxon>
        <taxon>Chordata</taxon>
        <taxon>Craniata</taxon>
        <taxon>Vertebrata</taxon>
        <taxon>Euteleostomi</taxon>
        <taxon>Mammalia</taxon>
        <taxon>Eutheria</taxon>
        <taxon>Laurasiatheria</taxon>
        <taxon>Carnivora</taxon>
        <taxon>Caniformia</taxon>
        <taxon>Canidae</taxon>
        <taxon>Canis</taxon>
    </lineage>
</organism>
<reference key="1">
    <citation type="journal article" date="2005" name="Nature">
        <title>Genome sequence, comparative analysis and haplotype structure of the domestic dog.</title>
        <authorList>
            <person name="Lindblad-Toh K."/>
            <person name="Wade C.M."/>
            <person name="Mikkelsen T.S."/>
            <person name="Karlsson E.K."/>
            <person name="Jaffe D.B."/>
            <person name="Kamal M."/>
            <person name="Clamp M."/>
            <person name="Chang J.L."/>
            <person name="Kulbokas E.J. III"/>
            <person name="Zody M.C."/>
            <person name="Mauceli E."/>
            <person name="Xie X."/>
            <person name="Breen M."/>
            <person name="Wayne R.K."/>
            <person name="Ostrander E.A."/>
            <person name="Ponting C.P."/>
            <person name="Galibert F."/>
            <person name="Smith D.R."/>
            <person name="deJong P.J."/>
            <person name="Kirkness E.F."/>
            <person name="Alvarez P."/>
            <person name="Biagi T."/>
            <person name="Brockman W."/>
            <person name="Butler J."/>
            <person name="Chin C.-W."/>
            <person name="Cook A."/>
            <person name="Cuff J."/>
            <person name="Daly M.J."/>
            <person name="DeCaprio D."/>
            <person name="Gnerre S."/>
            <person name="Grabherr M."/>
            <person name="Kellis M."/>
            <person name="Kleber M."/>
            <person name="Bardeleben C."/>
            <person name="Goodstadt L."/>
            <person name="Heger A."/>
            <person name="Hitte C."/>
            <person name="Kim L."/>
            <person name="Koepfli K.-P."/>
            <person name="Parker H.G."/>
            <person name="Pollinger J.P."/>
            <person name="Searle S.M.J."/>
            <person name="Sutter N.B."/>
            <person name="Thomas R."/>
            <person name="Webber C."/>
            <person name="Baldwin J."/>
            <person name="Abebe A."/>
            <person name="Abouelleil A."/>
            <person name="Aftuck L."/>
            <person name="Ait-Zahra M."/>
            <person name="Aldredge T."/>
            <person name="Allen N."/>
            <person name="An P."/>
            <person name="Anderson S."/>
            <person name="Antoine C."/>
            <person name="Arachchi H."/>
            <person name="Aslam A."/>
            <person name="Ayotte L."/>
            <person name="Bachantsang P."/>
            <person name="Barry A."/>
            <person name="Bayul T."/>
            <person name="Benamara M."/>
            <person name="Berlin A."/>
            <person name="Bessette D."/>
            <person name="Blitshteyn B."/>
            <person name="Bloom T."/>
            <person name="Blye J."/>
            <person name="Boguslavskiy L."/>
            <person name="Bonnet C."/>
            <person name="Boukhgalter B."/>
            <person name="Brown A."/>
            <person name="Cahill P."/>
            <person name="Calixte N."/>
            <person name="Camarata J."/>
            <person name="Cheshatsang Y."/>
            <person name="Chu J."/>
            <person name="Citroen M."/>
            <person name="Collymore A."/>
            <person name="Cooke P."/>
            <person name="Dawoe T."/>
            <person name="Daza R."/>
            <person name="Decktor K."/>
            <person name="DeGray S."/>
            <person name="Dhargay N."/>
            <person name="Dooley K."/>
            <person name="Dooley K."/>
            <person name="Dorje P."/>
            <person name="Dorjee K."/>
            <person name="Dorris L."/>
            <person name="Duffey N."/>
            <person name="Dupes A."/>
            <person name="Egbiremolen O."/>
            <person name="Elong R."/>
            <person name="Falk J."/>
            <person name="Farina A."/>
            <person name="Faro S."/>
            <person name="Ferguson D."/>
            <person name="Ferreira P."/>
            <person name="Fisher S."/>
            <person name="FitzGerald M."/>
            <person name="Foley K."/>
            <person name="Foley C."/>
            <person name="Franke A."/>
            <person name="Friedrich D."/>
            <person name="Gage D."/>
            <person name="Garber M."/>
            <person name="Gearin G."/>
            <person name="Giannoukos G."/>
            <person name="Goode T."/>
            <person name="Goyette A."/>
            <person name="Graham J."/>
            <person name="Grandbois E."/>
            <person name="Gyaltsen K."/>
            <person name="Hafez N."/>
            <person name="Hagopian D."/>
            <person name="Hagos B."/>
            <person name="Hall J."/>
            <person name="Healy C."/>
            <person name="Hegarty R."/>
            <person name="Honan T."/>
            <person name="Horn A."/>
            <person name="Houde N."/>
            <person name="Hughes L."/>
            <person name="Hunnicutt L."/>
            <person name="Husby M."/>
            <person name="Jester B."/>
            <person name="Jones C."/>
            <person name="Kamat A."/>
            <person name="Kanga B."/>
            <person name="Kells C."/>
            <person name="Khazanovich D."/>
            <person name="Kieu A.C."/>
            <person name="Kisner P."/>
            <person name="Kumar M."/>
            <person name="Lance K."/>
            <person name="Landers T."/>
            <person name="Lara M."/>
            <person name="Lee W."/>
            <person name="Leger J.-P."/>
            <person name="Lennon N."/>
            <person name="Leuper L."/>
            <person name="LeVine S."/>
            <person name="Liu J."/>
            <person name="Liu X."/>
            <person name="Lokyitsang Y."/>
            <person name="Lokyitsang T."/>
            <person name="Lui A."/>
            <person name="Macdonald J."/>
            <person name="Major J."/>
            <person name="Marabella R."/>
            <person name="Maru K."/>
            <person name="Matthews C."/>
            <person name="McDonough S."/>
            <person name="Mehta T."/>
            <person name="Meldrim J."/>
            <person name="Melnikov A."/>
            <person name="Meneus L."/>
            <person name="Mihalev A."/>
            <person name="Mihova T."/>
            <person name="Miller K."/>
            <person name="Mittelman R."/>
            <person name="Mlenga V."/>
            <person name="Mulrain L."/>
            <person name="Munson G."/>
            <person name="Navidi A."/>
            <person name="Naylor J."/>
            <person name="Nguyen T."/>
            <person name="Nguyen N."/>
            <person name="Nguyen C."/>
            <person name="Nguyen T."/>
            <person name="Nicol R."/>
            <person name="Norbu N."/>
            <person name="Norbu C."/>
            <person name="Novod N."/>
            <person name="Nyima T."/>
            <person name="Olandt P."/>
            <person name="O'Neill B."/>
            <person name="O'Neill K."/>
            <person name="Osman S."/>
            <person name="Oyono L."/>
            <person name="Patti C."/>
            <person name="Perrin D."/>
            <person name="Phunkhang P."/>
            <person name="Pierre F."/>
            <person name="Priest M."/>
            <person name="Rachupka A."/>
            <person name="Raghuraman S."/>
            <person name="Rameau R."/>
            <person name="Ray V."/>
            <person name="Raymond C."/>
            <person name="Rege F."/>
            <person name="Rise C."/>
            <person name="Rogers J."/>
            <person name="Rogov P."/>
            <person name="Sahalie J."/>
            <person name="Settipalli S."/>
            <person name="Sharpe T."/>
            <person name="Shea T."/>
            <person name="Sheehan M."/>
            <person name="Sherpa N."/>
            <person name="Shi J."/>
            <person name="Shih D."/>
            <person name="Sloan J."/>
            <person name="Smith C."/>
            <person name="Sparrow T."/>
            <person name="Stalker J."/>
            <person name="Stange-Thomann N."/>
            <person name="Stavropoulos S."/>
            <person name="Stone C."/>
            <person name="Stone S."/>
            <person name="Sykes S."/>
            <person name="Tchuinga P."/>
            <person name="Tenzing P."/>
            <person name="Tesfaye S."/>
            <person name="Thoulutsang D."/>
            <person name="Thoulutsang Y."/>
            <person name="Topham K."/>
            <person name="Topping I."/>
            <person name="Tsamla T."/>
            <person name="Vassiliev H."/>
            <person name="Venkataraman V."/>
            <person name="Vo A."/>
            <person name="Wangchuk T."/>
            <person name="Wangdi T."/>
            <person name="Weiand M."/>
            <person name="Wilkinson J."/>
            <person name="Wilson A."/>
            <person name="Yadav S."/>
            <person name="Yang S."/>
            <person name="Yang X."/>
            <person name="Young G."/>
            <person name="Yu Q."/>
            <person name="Zainoun J."/>
            <person name="Zembek L."/>
            <person name="Zimmer A."/>
            <person name="Lander E.S."/>
        </authorList>
    </citation>
    <scope>NUCLEOTIDE SEQUENCE [LARGE SCALE GENOMIC DNA]</scope>
    <source>
        <strain>Boxer</strain>
    </source>
</reference>
<reference key="2">
    <citation type="journal article" date="2018" name="Nucleic Acids Res.">
        <title>MutT homologue 1 (MTH1) catalyzes the hydrolysis of mutagenic O6-methyl-dGTP.</title>
        <authorList>
            <person name="Jemth A.S."/>
            <person name="Gustafsson R."/>
            <person name="Braeutigam L."/>
            <person name="Henriksson L."/>
            <person name="Vallin K.S.A."/>
            <person name="Sarno A."/>
            <person name="Almloef I."/>
            <person name="Homan E."/>
            <person name="Rasti A."/>
            <person name="Warpman Berglund U."/>
            <person name="Stenmark P."/>
            <person name="Helleday T."/>
        </authorList>
    </citation>
    <scope>FUNCTION</scope>
    <scope>CATALYTIC ACTIVITY</scope>
</reference>
<reference key="3">
    <citation type="journal article" date="2020" name="J. Biol. Chem.">
        <title>MutT homologue 1 (MTH1) removes N6-methyl-dATP from the dNTP pool.</title>
        <authorList>
            <person name="Scaletti E.R."/>
            <person name="Vallin K.S."/>
            <person name="Braeutigam L."/>
            <person name="Sarno A."/>
            <person name="Warpman Berglund U."/>
            <person name="Helleday T."/>
            <person name="Stenmark P."/>
            <person name="Jemth A.S."/>
        </authorList>
    </citation>
    <scope>FUNCTION</scope>
    <scope>CATALYTIC ACTIVITY</scope>
</reference>
<reference evidence="14" key="4">
    <citation type="journal article" date="2018" name="Biochemistry">
        <title>Crystal Structures and Inhibitor Interactions of Mouse and Dog MTH1 Reveal Species-Specific Differences in Affinity.</title>
        <authorList>
            <person name="Narwal M."/>
            <person name="Jemth A.S."/>
            <person name="Gustafsson R."/>
            <person name="Almlof I."/>
            <person name="Warpman Berglund U."/>
            <person name="Helleday T."/>
            <person name="Stenmark P."/>
        </authorList>
    </citation>
    <scope>X-RAY CRYSTALLOGRAPHY (2.00 ANGSTROMS)</scope>
    <scope>CATALYTIC ACTIVITY</scope>
    <scope>FUNCTION</scope>
    <scope>SUBUNIT</scope>
</reference>
<keyword id="KW-0002">3D-structure</keyword>
<keyword id="KW-0963">Cytoplasm</keyword>
<keyword id="KW-0968">Cytoplasmic vesicle</keyword>
<keyword id="KW-0378">Hydrolase</keyword>
<keyword id="KW-0460">Magnesium</keyword>
<keyword id="KW-0472">Membrane</keyword>
<keyword id="KW-0479">Metal-binding</keyword>
<keyword id="KW-0539">Nucleus</keyword>
<keyword id="KW-1185">Reference proteome</keyword>
<keyword id="KW-0694">RNA-binding</keyword>
<comment type="function">
    <text evidence="1 5 6 7">Oxidized purine nucleoside triphosphate hydrolase which is a prominent sanitizer of the oxidized nucleotide pool (PubMed:29281266, PubMed:30304478, PubMed:32144205). Catalyzes the hydrolysis of 2-oxo-dATP (2-hydroxy-dATP) into 2-oxo-dAMP (By similarity). Also has a significant hydrolase activity toward 2-oxo-ATP, 8-oxo-dGTP and 8-oxo-dATP (PubMed:29281266, PubMed:30304478, PubMed:32144205). Through the hydrolysis of oxidized purine nucleoside triphosphates, prevents their incorporation into DNA and the subsequent transversions A:T to C:G and G:C to T:A (PubMed:29281266, PubMed:30304478, PubMed:32144205). Also catalyzes the hydrolysis of methylated purine nucleoside triphosphate preventing their integration into DNA (PubMed:30304478, PubMed:32144205). Through this antimutagenic activity protects cells from oxidative stress (PubMed:29281266, PubMed:30304478, PubMed:32144205).</text>
</comment>
<comment type="catalytic activity">
    <reaction evidence="1">
        <text>2-oxo-dATP + H2O = 2-oxo-dAMP + diphosphate + H(+)</text>
        <dbReference type="Rhea" id="RHEA:31583"/>
        <dbReference type="ChEBI" id="CHEBI:15377"/>
        <dbReference type="ChEBI" id="CHEBI:15378"/>
        <dbReference type="ChEBI" id="CHEBI:33019"/>
        <dbReference type="ChEBI" id="CHEBI:63212"/>
        <dbReference type="ChEBI" id="CHEBI:77897"/>
        <dbReference type="EC" id="3.6.1.56"/>
    </reaction>
    <physiologicalReaction direction="left-to-right" evidence="1">
        <dbReference type="Rhea" id="RHEA:31584"/>
    </physiologicalReaction>
</comment>
<comment type="catalytic activity">
    <reaction evidence="1">
        <text>2-oxo-ATP + H2O = 2-oxo-AMP + diphosphate + H(+)</text>
        <dbReference type="Rhea" id="RHEA:67392"/>
        <dbReference type="ChEBI" id="CHEBI:15377"/>
        <dbReference type="ChEBI" id="CHEBI:15378"/>
        <dbReference type="ChEBI" id="CHEBI:33019"/>
        <dbReference type="ChEBI" id="CHEBI:71395"/>
        <dbReference type="ChEBI" id="CHEBI:172878"/>
    </reaction>
    <physiologicalReaction direction="left-to-right" evidence="1">
        <dbReference type="Rhea" id="RHEA:67393"/>
    </physiologicalReaction>
</comment>
<comment type="catalytic activity">
    <reaction evidence="5 6 7">
        <text>8-oxo-dGTP + H2O = 8-oxo-dGMP + diphosphate + H(+)</text>
        <dbReference type="Rhea" id="RHEA:31575"/>
        <dbReference type="ChEBI" id="CHEBI:15377"/>
        <dbReference type="ChEBI" id="CHEBI:15378"/>
        <dbReference type="ChEBI" id="CHEBI:33019"/>
        <dbReference type="ChEBI" id="CHEBI:63224"/>
        <dbReference type="ChEBI" id="CHEBI:77896"/>
    </reaction>
    <physiologicalReaction direction="left-to-right" evidence="10">
        <dbReference type="Rhea" id="RHEA:31576"/>
    </physiologicalReaction>
</comment>
<comment type="catalytic activity">
    <reaction evidence="1">
        <text>8-oxo-dATP + H2O = 8-oxo-dAMP + diphosphate + H(+)</text>
        <dbReference type="Rhea" id="RHEA:65396"/>
        <dbReference type="ChEBI" id="CHEBI:15377"/>
        <dbReference type="ChEBI" id="CHEBI:15378"/>
        <dbReference type="ChEBI" id="CHEBI:33019"/>
        <dbReference type="ChEBI" id="CHEBI:71361"/>
        <dbReference type="ChEBI" id="CHEBI:172871"/>
    </reaction>
    <physiologicalReaction direction="left-to-right" evidence="1">
        <dbReference type="Rhea" id="RHEA:65397"/>
    </physiologicalReaction>
</comment>
<comment type="catalytic activity">
    <reaction evidence="6">
        <text>O(6)-methyl-dGTP + H2O = O(6)-methyl-dGMP + diphosphate + H(+)</text>
        <dbReference type="Rhea" id="RHEA:67600"/>
        <dbReference type="ChEBI" id="CHEBI:15377"/>
        <dbReference type="ChEBI" id="CHEBI:15378"/>
        <dbReference type="ChEBI" id="CHEBI:33019"/>
        <dbReference type="ChEBI" id="CHEBI:169974"/>
        <dbReference type="ChEBI" id="CHEBI:169975"/>
    </reaction>
    <physiologicalReaction direction="left-to-right" evidence="11">
        <dbReference type="Rhea" id="RHEA:67601"/>
    </physiologicalReaction>
</comment>
<comment type="catalytic activity">
    <reaction evidence="7">
        <text>N(6)-methyl-dATP + H2O = N(6)-methyl-dAMP + diphosphate + H(+)</text>
        <dbReference type="Rhea" id="RHEA:67604"/>
        <dbReference type="ChEBI" id="CHEBI:15377"/>
        <dbReference type="ChEBI" id="CHEBI:15378"/>
        <dbReference type="ChEBI" id="CHEBI:33019"/>
        <dbReference type="ChEBI" id="CHEBI:169976"/>
        <dbReference type="ChEBI" id="CHEBI:172872"/>
    </reaction>
    <physiologicalReaction direction="left-to-right" evidence="12">
        <dbReference type="Rhea" id="RHEA:67605"/>
    </physiologicalReaction>
</comment>
<comment type="catalytic activity">
    <reaction evidence="1">
        <text>N(6)-methyl-ATP + H2O = N(6)-methyl-AMP + diphosphate + H(+)</text>
        <dbReference type="Rhea" id="RHEA:67608"/>
        <dbReference type="ChEBI" id="CHEBI:15377"/>
        <dbReference type="ChEBI" id="CHEBI:15378"/>
        <dbReference type="ChEBI" id="CHEBI:33019"/>
        <dbReference type="ChEBI" id="CHEBI:144842"/>
        <dbReference type="ChEBI" id="CHEBI:172873"/>
    </reaction>
    <physiologicalReaction direction="left-to-right" evidence="1">
        <dbReference type="Rhea" id="RHEA:67609"/>
    </physiologicalReaction>
</comment>
<comment type="cofactor">
    <cofactor evidence="3">
        <name>Mg(2+)</name>
        <dbReference type="ChEBI" id="CHEBI:18420"/>
    </cofactor>
    <text evidence="3">Binds 2 Mg(2+) ion per subunit.</text>
</comment>
<comment type="subunit">
    <text evidence="10">Monomer.</text>
</comment>
<comment type="subcellular location">
    <subcellularLocation>
        <location evidence="2">Cytoplasm</location>
    </subcellularLocation>
    <subcellularLocation>
        <location evidence="2">Nucleus</location>
    </subcellularLocation>
    <subcellularLocation>
        <location evidence="2">Nucleus membrane</location>
    </subcellularLocation>
    <subcellularLocation>
        <location evidence="2">Cytoplasmic vesicle</location>
        <location evidence="2">Secretory vesicle</location>
        <location evidence="2">Acrosome</location>
    </subcellularLocation>
</comment>
<comment type="similarity">
    <text evidence="9">Belongs to the Nudix hydrolase family.</text>
</comment>
<name>8ODP_CANLF</name>